<dbReference type="EC" id="1.14.99.-"/>
<dbReference type="EMBL" id="HE600983">
    <property type="protein sequence ID" value="CAP33127.1"/>
    <property type="molecule type" value="Genomic_DNA"/>
</dbReference>
<dbReference type="RefSeq" id="XP_002644688.1">
    <property type="nucleotide sequence ID" value="XM_002644642.1"/>
</dbReference>
<dbReference type="FunCoup" id="Q618G2">
    <property type="interactions" value="91"/>
</dbReference>
<dbReference type="STRING" id="6238.Q618G2"/>
<dbReference type="EnsemblMetazoa" id="CBG14675.1">
    <property type="protein sequence ID" value="CBG14675.1"/>
    <property type="gene ID" value="WBGene00035097"/>
</dbReference>
<dbReference type="GeneID" id="8586684"/>
<dbReference type="KEGG" id="cbr:CBG_14675"/>
<dbReference type="CTD" id="8586684"/>
<dbReference type="WormBase" id="CBG14675">
    <property type="protein sequence ID" value="CBP03614"/>
    <property type="gene ID" value="WBGene00035097"/>
</dbReference>
<dbReference type="eggNOG" id="KOG0873">
    <property type="taxonomic scope" value="Eukaryota"/>
</dbReference>
<dbReference type="HOGENOM" id="CLU_047036_5_1_1"/>
<dbReference type="InParanoid" id="Q618G2"/>
<dbReference type="OMA" id="TTWGFMV"/>
<dbReference type="OrthoDB" id="1658724at2759"/>
<dbReference type="Proteomes" id="UP000008549">
    <property type="component" value="Unassembled WGS sequence"/>
</dbReference>
<dbReference type="GO" id="GO:0005789">
    <property type="term" value="C:endoplasmic reticulum membrane"/>
    <property type="evidence" value="ECO:0000318"/>
    <property type="project" value="GO_Central"/>
</dbReference>
<dbReference type="GO" id="GO:0000254">
    <property type="term" value="F:C-4 methylsterol oxidase activity"/>
    <property type="evidence" value="ECO:0000318"/>
    <property type="project" value="GO_Central"/>
</dbReference>
<dbReference type="GO" id="GO:0005506">
    <property type="term" value="F:iron ion binding"/>
    <property type="evidence" value="ECO:0007669"/>
    <property type="project" value="InterPro"/>
</dbReference>
<dbReference type="GO" id="GO:0016126">
    <property type="term" value="P:sterol biosynthetic process"/>
    <property type="evidence" value="ECO:0000318"/>
    <property type="project" value="GO_Central"/>
</dbReference>
<dbReference type="InterPro" id="IPR006694">
    <property type="entry name" value="Fatty_acid_hydroxylase"/>
</dbReference>
<dbReference type="InterPro" id="IPR050307">
    <property type="entry name" value="Sterol_Desaturase_Related"/>
</dbReference>
<dbReference type="PANTHER" id="PTHR11863">
    <property type="entry name" value="STEROL DESATURASE"/>
    <property type="match status" value="1"/>
</dbReference>
<dbReference type="Pfam" id="PF04116">
    <property type="entry name" value="FA_hydroxylase"/>
    <property type="match status" value="1"/>
</dbReference>
<protein>
    <recommendedName>
        <fullName>Cholesterol 25-hydroxylase-like protein</fullName>
        <ecNumber>1.14.99.-</ecNumber>
    </recommendedName>
</protein>
<sequence>MLDLYPVHNFTVEQLEYEKNTRVLQPVWDWIKNGNEHILSSPLFPPFYALSIDYTWVAVFTFIDLFLYDVPFFKNAKIQKDRVVTWDLMKKSLKLQGWNQLLWIYPMALVQLIWVPDTELPILAPTVFEMVSQLAIFFLAFDFTYFWFHYFNHKIKWLYRWCHSVHHMYSSPFAASAQHLHPFELFFVATFITTVPWIFPTHCLTYWLWFFVAQSVSYEVHIGYDFPFALHRIFWFYSGAPAHDMHHLRPLTCFQPWFNYLDRLMGYHITYEDLKKMTEAKFKKFGLYSVEDEKGLIKIN</sequence>
<name>C25HL_CAEBR</name>
<keyword id="KW-0325">Glycoprotein</keyword>
<keyword id="KW-0408">Iron</keyword>
<keyword id="KW-0444">Lipid biosynthesis</keyword>
<keyword id="KW-0443">Lipid metabolism</keyword>
<keyword id="KW-0472">Membrane</keyword>
<keyword id="KW-0479">Metal-binding</keyword>
<keyword id="KW-0560">Oxidoreductase</keyword>
<keyword id="KW-1185">Reference proteome</keyword>
<keyword id="KW-0752">Steroid biosynthesis</keyword>
<keyword id="KW-0753">Steroid metabolism</keyword>
<keyword id="KW-0756">Sterol biosynthesis</keyword>
<keyword id="KW-1207">Sterol metabolism</keyword>
<keyword id="KW-0812">Transmembrane</keyword>
<keyword id="KW-1133">Transmembrane helix</keyword>
<reference key="1">
    <citation type="journal article" date="2003" name="PLoS Biol.">
        <title>The genome sequence of Caenorhabditis briggsae: a platform for comparative genomics.</title>
        <authorList>
            <person name="Stein L.D."/>
            <person name="Bao Z."/>
            <person name="Blasiar D."/>
            <person name="Blumenthal T."/>
            <person name="Brent M.R."/>
            <person name="Chen N."/>
            <person name="Chinwalla A."/>
            <person name="Clarke L."/>
            <person name="Clee C."/>
            <person name="Coghlan A."/>
            <person name="Coulson A."/>
            <person name="D'Eustachio P."/>
            <person name="Fitch D.H.A."/>
            <person name="Fulton L.A."/>
            <person name="Fulton R.E."/>
            <person name="Griffiths-Jones S."/>
            <person name="Harris T.W."/>
            <person name="Hillier L.W."/>
            <person name="Kamath R."/>
            <person name="Kuwabara P.E."/>
            <person name="Mardis E.R."/>
            <person name="Marra M.A."/>
            <person name="Miner T.L."/>
            <person name="Minx P."/>
            <person name="Mullikin J.C."/>
            <person name="Plumb R.W."/>
            <person name="Rogers J."/>
            <person name="Schein J.E."/>
            <person name="Sohrmann M."/>
            <person name="Spieth J."/>
            <person name="Stajich J.E."/>
            <person name="Wei C."/>
            <person name="Willey D."/>
            <person name="Wilson R.K."/>
            <person name="Durbin R.M."/>
            <person name="Waterston R.H."/>
        </authorList>
    </citation>
    <scope>NUCLEOTIDE SEQUENCE [LARGE SCALE GENOMIC DNA]</scope>
    <source>
        <strain>AF16</strain>
    </source>
</reference>
<evidence type="ECO:0000250" key="1"/>
<evidence type="ECO:0000255" key="2"/>
<evidence type="ECO:0000305" key="3"/>
<organism>
    <name type="scientific">Caenorhabditis briggsae</name>
    <dbReference type="NCBI Taxonomy" id="6238"/>
    <lineage>
        <taxon>Eukaryota</taxon>
        <taxon>Metazoa</taxon>
        <taxon>Ecdysozoa</taxon>
        <taxon>Nematoda</taxon>
        <taxon>Chromadorea</taxon>
        <taxon>Rhabditida</taxon>
        <taxon>Rhabditina</taxon>
        <taxon>Rhabditomorpha</taxon>
        <taxon>Rhabditoidea</taxon>
        <taxon>Rhabditidae</taxon>
        <taxon>Peloderinae</taxon>
        <taxon>Caenorhabditis</taxon>
    </lineage>
</organism>
<feature type="chain" id="PRO_0000226807" description="Cholesterol 25-hydroxylase-like protein">
    <location>
        <begin position="1"/>
        <end position="300"/>
    </location>
</feature>
<feature type="transmembrane region" description="Helical" evidence="2">
    <location>
        <begin position="43"/>
        <end position="63"/>
    </location>
</feature>
<feature type="transmembrane region" description="Helical" evidence="2">
    <location>
        <begin position="95"/>
        <end position="115"/>
    </location>
</feature>
<feature type="transmembrane region" description="Helical" evidence="2">
    <location>
        <begin position="130"/>
        <end position="152"/>
    </location>
</feature>
<feature type="transmembrane region" description="Helical" evidence="2">
    <location>
        <begin position="180"/>
        <end position="200"/>
    </location>
</feature>
<feature type="domain" description="Fatty acid hydroxylase" evidence="2">
    <location>
        <begin position="135"/>
        <end position="266"/>
    </location>
</feature>
<feature type="short sequence motif" description="Histidine box-1" evidence="1">
    <location>
        <begin position="148"/>
        <end position="152"/>
    </location>
</feature>
<feature type="short sequence motif" description="Histidine box-2" evidence="1">
    <location>
        <begin position="163"/>
        <end position="167"/>
    </location>
</feature>
<feature type="short sequence motif" description="Histidine box-3" evidence="1">
    <location>
        <begin position="242"/>
        <end position="248"/>
    </location>
</feature>
<feature type="glycosylation site" description="N-linked (GlcNAc...) asparagine" evidence="2">
    <location>
        <position position="9"/>
    </location>
</feature>
<comment type="function">
    <text evidence="1">Probable sterol desaturase.</text>
</comment>
<comment type="cofactor">
    <cofactor evidence="1">
        <name>Fe cation</name>
        <dbReference type="ChEBI" id="CHEBI:24875"/>
    </cofactor>
</comment>
<comment type="subcellular location">
    <subcellularLocation>
        <location evidence="3">Membrane</location>
        <topology evidence="3">Multi-pass membrane protein</topology>
    </subcellularLocation>
</comment>
<comment type="similarity">
    <text evidence="3">Belongs to the sterol desaturase family.</text>
</comment>
<gene>
    <name type="ORF">CBG14675</name>
</gene>
<accession>Q618G2</accession>
<accession>A8XKF3</accession>
<proteinExistence type="inferred from homology"/>